<feature type="chain" id="PRO_1000012391" description="UDP-N-acetylmuramoyl-L-alanyl-D-glutamate--L-lysine ligase">
    <location>
        <begin position="1"/>
        <end position="481"/>
    </location>
</feature>
<feature type="short sequence motif" description="L-lysine recognition motif">
    <location>
        <begin position="404"/>
        <end position="407"/>
    </location>
</feature>
<feature type="binding site" evidence="1">
    <location>
        <position position="42"/>
    </location>
    <ligand>
        <name>UDP-N-acetyl-alpha-D-muramoyl-L-alanyl-D-glutamate</name>
        <dbReference type="ChEBI" id="CHEBI:83900"/>
    </ligand>
</feature>
<feature type="binding site" evidence="1">
    <location>
        <begin position="118"/>
        <end position="124"/>
    </location>
    <ligand>
        <name>ATP</name>
        <dbReference type="ChEBI" id="CHEBI:30616"/>
    </ligand>
</feature>
<feature type="binding site" evidence="1">
    <location>
        <position position="158"/>
    </location>
    <ligand>
        <name>UDP-N-acetyl-alpha-D-muramoyl-L-alanyl-D-glutamate</name>
        <dbReference type="ChEBI" id="CHEBI:83900"/>
    </ligand>
</feature>
<feature type="binding site" evidence="1">
    <location>
        <begin position="160"/>
        <end position="161"/>
    </location>
    <ligand>
        <name>UDP-N-acetyl-alpha-D-muramoyl-L-alanyl-D-glutamate</name>
        <dbReference type="ChEBI" id="CHEBI:83900"/>
    </ligand>
</feature>
<feature type="binding site" evidence="1">
    <location>
        <position position="187"/>
    </location>
    <ligand>
        <name>UDP-N-acetyl-alpha-D-muramoyl-L-alanyl-D-glutamate</name>
        <dbReference type="ChEBI" id="CHEBI:83900"/>
    </ligand>
</feature>
<feature type="binding site" evidence="1">
    <location>
        <position position="195"/>
    </location>
    <ligand>
        <name>UDP-N-acetyl-alpha-D-muramoyl-L-alanyl-D-glutamate</name>
        <dbReference type="ChEBI" id="CHEBI:83900"/>
    </ligand>
</feature>
<feature type="modified residue" description="N6-carboxylysine" evidence="1">
    <location>
        <position position="229"/>
    </location>
</feature>
<evidence type="ECO:0000255" key="1">
    <source>
        <dbReference type="HAMAP-Rule" id="MF_00208"/>
    </source>
</evidence>
<reference key="1">
    <citation type="journal article" date="2005" name="J. Infect. Dis.">
        <title>Genome sequence of a serotype M28 strain of group A Streptococcus: potential new insights into puerperal sepsis and bacterial disease specificity.</title>
        <authorList>
            <person name="Green N.M."/>
            <person name="Zhang S."/>
            <person name="Porcella S.F."/>
            <person name="Nagiec M.J."/>
            <person name="Barbian K.D."/>
            <person name="Beres S.B."/>
            <person name="Lefebvre R.B."/>
            <person name="Musser J.M."/>
        </authorList>
    </citation>
    <scope>NUCLEOTIDE SEQUENCE [LARGE SCALE GENOMIC DNA]</scope>
    <source>
        <strain>MGAS6180</strain>
    </source>
</reference>
<keyword id="KW-0067">ATP-binding</keyword>
<keyword id="KW-0131">Cell cycle</keyword>
<keyword id="KW-0132">Cell division</keyword>
<keyword id="KW-0133">Cell shape</keyword>
<keyword id="KW-0961">Cell wall biogenesis/degradation</keyword>
<keyword id="KW-0963">Cytoplasm</keyword>
<keyword id="KW-0436">Ligase</keyword>
<keyword id="KW-0547">Nucleotide-binding</keyword>
<keyword id="KW-0573">Peptidoglycan synthesis</keyword>
<proteinExistence type="inferred from homology"/>
<dbReference type="EC" id="6.3.2.7" evidence="1"/>
<dbReference type="EMBL" id="CP000056">
    <property type="protein sequence ID" value="AAX71428.1"/>
    <property type="molecule type" value="Genomic_DNA"/>
</dbReference>
<dbReference type="RefSeq" id="WP_011284530.1">
    <property type="nucleotide sequence ID" value="NC_007296.2"/>
</dbReference>
<dbReference type="SMR" id="Q48V28"/>
<dbReference type="KEGG" id="spb:M28_Spy0314"/>
<dbReference type="HOGENOM" id="CLU_022291_4_2_9"/>
<dbReference type="UniPathway" id="UPA00219"/>
<dbReference type="GO" id="GO:0005737">
    <property type="term" value="C:cytoplasm"/>
    <property type="evidence" value="ECO:0007669"/>
    <property type="project" value="UniProtKB-SubCell"/>
</dbReference>
<dbReference type="GO" id="GO:0005524">
    <property type="term" value="F:ATP binding"/>
    <property type="evidence" value="ECO:0007669"/>
    <property type="project" value="UniProtKB-UniRule"/>
</dbReference>
<dbReference type="GO" id="GO:0000287">
    <property type="term" value="F:magnesium ion binding"/>
    <property type="evidence" value="ECO:0007669"/>
    <property type="project" value="UniProtKB-UniRule"/>
</dbReference>
<dbReference type="GO" id="GO:0047482">
    <property type="term" value="F:UDP-N-acetylmuramoyl-L-alanyl-D-glutamate-L-lysine ligase activity"/>
    <property type="evidence" value="ECO:0007669"/>
    <property type="project" value="UniProtKB-UniRule"/>
</dbReference>
<dbReference type="GO" id="GO:0051301">
    <property type="term" value="P:cell division"/>
    <property type="evidence" value="ECO:0007669"/>
    <property type="project" value="UniProtKB-KW"/>
</dbReference>
<dbReference type="GO" id="GO:0071555">
    <property type="term" value="P:cell wall organization"/>
    <property type="evidence" value="ECO:0007669"/>
    <property type="project" value="UniProtKB-KW"/>
</dbReference>
<dbReference type="GO" id="GO:0009252">
    <property type="term" value="P:peptidoglycan biosynthetic process"/>
    <property type="evidence" value="ECO:0007669"/>
    <property type="project" value="UniProtKB-UniRule"/>
</dbReference>
<dbReference type="GO" id="GO:0008360">
    <property type="term" value="P:regulation of cell shape"/>
    <property type="evidence" value="ECO:0007669"/>
    <property type="project" value="UniProtKB-KW"/>
</dbReference>
<dbReference type="Gene3D" id="3.90.190.20">
    <property type="entry name" value="Mur ligase, C-terminal domain"/>
    <property type="match status" value="1"/>
</dbReference>
<dbReference type="Gene3D" id="3.40.1190.10">
    <property type="entry name" value="Mur-like, catalytic domain"/>
    <property type="match status" value="1"/>
</dbReference>
<dbReference type="Gene3D" id="3.40.1390.10">
    <property type="entry name" value="MurE/MurF, N-terminal domain"/>
    <property type="match status" value="1"/>
</dbReference>
<dbReference type="HAMAP" id="MF_00208">
    <property type="entry name" value="MurE"/>
    <property type="match status" value="1"/>
</dbReference>
<dbReference type="InterPro" id="IPR036565">
    <property type="entry name" value="Mur-like_cat_sf"/>
</dbReference>
<dbReference type="InterPro" id="IPR004101">
    <property type="entry name" value="Mur_ligase_C"/>
</dbReference>
<dbReference type="InterPro" id="IPR036615">
    <property type="entry name" value="Mur_ligase_C_dom_sf"/>
</dbReference>
<dbReference type="InterPro" id="IPR013221">
    <property type="entry name" value="Mur_ligase_cen"/>
</dbReference>
<dbReference type="InterPro" id="IPR035911">
    <property type="entry name" value="MurE/MurF_N"/>
</dbReference>
<dbReference type="InterPro" id="IPR005761">
    <property type="entry name" value="UDP-N-AcMur-Glu-dNH2Pim_ligase"/>
</dbReference>
<dbReference type="NCBIfam" id="TIGR01085">
    <property type="entry name" value="murE"/>
    <property type="match status" value="1"/>
</dbReference>
<dbReference type="NCBIfam" id="NF010628">
    <property type="entry name" value="PRK14022.1"/>
    <property type="match status" value="1"/>
</dbReference>
<dbReference type="PANTHER" id="PTHR23135">
    <property type="entry name" value="MUR LIGASE FAMILY MEMBER"/>
    <property type="match status" value="1"/>
</dbReference>
<dbReference type="PANTHER" id="PTHR23135:SF4">
    <property type="entry name" value="UDP-N-ACETYLMURAMOYL-L-ALANYL-D-GLUTAMATE--2,6-DIAMINOPIMELATE LIGASE MURE HOMOLOG, CHLOROPLASTIC"/>
    <property type="match status" value="1"/>
</dbReference>
<dbReference type="Pfam" id="PF02875">
    <property type="entry name" value="Mur_ligase_C"/>
    <property type="match status" value="1"/>
</dbReference>
<dbReference type="Pfam" id="PF08245">
    <property type="entry name" value="Mur_ligase_M"/>
    <property type="match status" value="1"/>
</dbReference>
<dbReference type="SUPFAM" id="SSF53623">
    <property type="entry name" value="MurD-like peptide ligases, catalytic domain"/>
    <property type="match status" value="1"/>
</dbReference>
<dbReference type="SUPFAM" id="SSF53244">
    <property type="entry name" value="MurD-like peptide ligases, peptide-binding domain"/>
    <property type="match status" value="1"/>
</dbReference>
<dbReference type="SUPFAM" id="SSF63418">
    <property type="entry name" value="MurE/MurF N-terminal domain"/>
    <property type="match status" value="1"/>
</dbReference>
<name>MURE_STRPM</name>
<comment type="function">
    <text evidence="1">Catalyzes the addition of L-lysine to the nucleotide precursor UDP-N-acetylmuramoyl-L-alanyl-D-glutamate (UMAG) in the biosynthesis of bacterial cell-wall peptidoglycan.</text>
</comment>
<comment type="catalytic activity">
    <reaction evidence="1">
        <text>UDP-N-acetyl-alpha-D-muramoyl-L-alanyl-D-glutamate + L-lysine + ATP = UDP-N-acetyl-alpha-D-muramoyl-L-alanyl-gamma-D-glutamyl-L-lysine + ADP + phosphate + H(+)</text>
        <dbReference type="Rhea" id="RHEA:17969"/>
        <dbReference type="ChEBI" id="CHEBI:15378"/>
        <dbReference type="ChEBI" id="CHEBI:30616"/>
        <dbReference type="ChEBI" id="CHEBI:32551"/>
        <dbReference type="ChEBI" id="CHEBI:43474"/>
        <dbReference type="ChEBI" id="CHEBI:83900"/>
        <dbReference type="ChEBI" id="CHEBI:83903"/>
        <dbReference type="ChEBI" id="CHEBI:456216"/>
        <dbReference type="EC" id="6.3.2.7"/>
    </reaction>
</comment>
<comment type="pathway">
    <text evidence="1">Cell wall biogenesis; peptidoglycan biosynthesis.</text>
</comment>
<comment type="subcellular location">
    <subcellularLocation>
        <location evidence="1">Cytoplasm</location>
    </subcellularLocation>
</comment>
<comment type="PTM">
    <text evidence="1">Carboxylation is probably crucial for Mg(2+) binding and, consequently, for the gamma-phosphate positioning of ATP.</text>
</comment>
<comment type="similarity">
    <text evidence="1">Belongs to the MurCDEF family. MurE subfamily.</text>
</comment>
<accession>Q48V28</accession>
<organism>
    <name type="scientific">Streptococcus pyogenes serotype M28 (strain MGAS6180)</name>
    <dbReference type="NCBI Taxonomy" id="319701"/>
    <lineage>
        <taxon>Bacteria</taxon>
        <taxon>Bacillati</taxon>
        <taxon>Bacillota</taxon>
        <taxon>Bacilli</taxon>
        <taxon>Lactobacillales</taxon>
        <taxon>Streptococcaceae</taxon>
        <taxon>Streptococcus</taxon>
    </lineage>
</organism>
<sequence>MITIEQLLDILKKDHNFREVLDADGYHYHYQGFSFERLSYDSRQVDGKTLFFAKGATFKADYLKEAITNGLQLYISEVDYELGIPVVLVTDIKKAMSLIAMVFYGNPQEKLKLLAFTGTKGKTTAAYFAYHMLKESYKPAMFSTMNTTLDGKTFFKSQLTTPESLDLFAMMAECVTNGMTHLIMEVSSQAYLVDRVYGLTFDVGVFLNISPDHIGPIEHPTFEDYFYHKRLLMENSRAVVINSGMDHFSFLADQVADQEHVFYGPLSDNQITTSQAFSFEAKGQLAGHYDIQLIGHFNQENAMAAGLACLRLGASLADIQKGIAKTRVPGRMEVLTMTNHAKVFVDYAHNGDSLEKLLSVVEEHQTGKLMLILGAPGNKGESRRADFGRVIHQHPNLTVILTADDPNFEDPEDISKEIASHIARPVEIISDREQAIQKAMSLCQGAKDAVIIAGKGADAYQIVKGQQVAYAGDLAIARHYL</sequence>
<protein>
    <recommendedName>
        <fullName evidence="1">UDP-N-acetylmuramoyl-L-alanyl-D-glutamate--L-lysine ligase</fullName>
        <ecNumber evidence="1">6.3.2.7</ecNumber>
    </recommendedName>
    <alternativeName>
        <fullName evidence="1">L-lysine-adding enzyme</fullName>
    </alternativeName>
    <alternativeName>
        <fullName evidence="1">UDP-MurNAc-L-Ala-D-Glu:L-Lys ligase</fullName>
    </alternativeName>
    <alternativeName>
        <fullName evidence="1">UDP-MurNAc-tripeptide synthetase</fullName>
    </alternativeName>
    <alternativeName>
        <fullName evidence="1">UDP-N-acetylmuramyl-tripeptide synthetase</fullName>
    </alternativeName>
</protein>
<gene>
    <name evidence="1" type="primary">murE</name>
    <name type="ordered locus">M28_Spy0314</name>
</gene>